<comment type="function">
    <text>Abolishes the inhibitory effect of tetracyclin on protein synthesis by a non-covalent modification of the ribosomes.</text>
</comment>
<comment type="similarity">
    <text evidence="2">Belongs to the TRAFAC class translation factor GTPase superfamily. Classic translation factor GTPase family. TetM/TetO subfamily.</text>
</comment>
<sequence>MKIINIGVLAHVDAGKTTLTESLLYNSGAITELGSVDRGTTKTDNTLLERQRGITIQTAITSFQWKNTKVNIIDTPGHMDFLAEVYRSLSVLDGAILLISAKDGVQAQTRILFHALRKIGIPTIFFINKIDQNGIDLSTVYQDIKEKLSAEIVIKQKVELHPNMRVMNFTESEQWDMVIEGNDYLLEKYTSGKLLEALELEQEESIRFHNCSLFPVYHGSAKNNIGIDNLIEVITNKFYSSTHRGQSELCGKVFKIEYSEKRQRLAYIRLYSGVLHLRDPVRISEKEKIKITEMYTSINGELCKIDKAYSGEIVILQNEFLKLNSVLGDTKLLPQRERIENPLPLLQTTVEPSKPQQREMLLDALLEISDSDPLLRYYVDSATHEIILSFLGKVQMEVTCALLQEKYHVEIEIKEPTVIYMERPLKKAEYTIHIEVPPNPFWASIGLSVAPLPLGSGVQYESSVSLGYLNQSFQNAVMEGIRYGCEQGLYGWNVTDCKICFKYGLYYSPVSTPADFRMLAPIVLEQVLKKAGTELLEPYLSFKIYAPQEYLSRAYNDAPKYCANIVDTQLKNNEVILSGEIPARCIQEYRSDLTFFTNGRSVCLTELKGYHVTTGEPVCQPRRPNSRIDKVRYMFNKIT</sequence>
<accession>P11131</accession>
<keyword id="KW-0046">Antibiotic resistance</keyword>
<keyword id="KW-0342">GTP-binding</keyword>
<keyword id="KW-0547">Nucleotide-binding</keyword>
<keyword id="KW-0648">Protein biosynthesis</keyword>
<keyword id="KW-0814">Transposable element</keyword>
<name>TET5_ENTFL</name>
<proteinExistence type="inferred from homology"/>
<gene>
    <name type="primary">tetM</name>
    <name type="synonym">tet(M)</name>
</gene>
<reference key="1">
    <citation type="journal article" date="1986" name="Nucleic Acids Res.">
        <title>Nucleotide sequence of the tetM tetracycline resistance determinant of the streptococcal conjugative shuttle transposon Tn1545.</title>
        <authorList>
            <person name="Martin P."/>
            <person name="Trieu-Cuot P."/>
            <person name="Courvalin P."/>
        </authorList>
    </citation>
    <scope>NUCLEOTIDE SEQUENCE [GENOMIC DNA]</scope>
    <source>
        <strain>BM4127</strain>
        <transposon>Tn1545</transposon>
    </source>
</reference>
<organism>
    <name type="scientific">Enterococcus faecalis</name>
    <name type="common">Streptococcus faecalis</name>
    <dbReference type="NCBI Taxonomy" id="1351"/>
    <lineage>
        <taxon>Bacteria</taxon>
        <taxon>Bacillati</taxon>
        <taxon>Bacillota</taxon>
        <taxon>Bacilli</taxon>
        <taxon>Lactobacillales</taxon>
        <taxon>Enterococcaceae</taxon>
        <taxon>Enterococcus</taxon>
    </lineage>
</organism>
<evidence type="ECO:0000250" key="1"/>
<evidence type="ECO:0000255" key="2">
    <source>
        <dbReference type="PROSITE-ProRule" id="PRU01059"/>
    </source>
</evidence>
<dbReference type="EMBL" id="X04388">
    <property type="protein sequence ID" value="CAA27977.1"/>
    <property type="molecule type" value="Genomic_DNA"/>
</dbReference>
<dbReference type="PIR" id="A24333">
    <property type="entry name" value="A24333"/>
</dbReference>
<dbReference type="RefSeq" id="WP_004632336.1">
    <property type="nucleotide sequence ID" value="NG_048212.1"/>
</dbReference>
<dbReference type="SMR" id="P11131"/>
<dbReference type="eggNOG" id="COG0480">
    <property type="taxonomic scope" value="Bacteria"/>
</dbReference>
<dbReference type="GO" id="GO:0005525">
    <property type="term" value="F:GTP binding"/>
    <property type="evidence" value="ECO:0007669"/>
    <property type="project" value="UniProtKB-KW"/>
</dbReference>
<dbReference type="GO" id="GO:0003924">
    <property type="term" value="F:GTPase activity"/>
    <property type="evidence" value="ECO:0007669"/>
    <property type="project" value="InterPro"/>
</dbReference>
<dbReference type="GO" id="GO:0046677">
    <property type="term" value="P:response to antibiotic"/>
    <property type="evidence" value="ECO:0007669"/>
    <property type="project" value="UniProtKB-KW"/>
</dbReference>
<dbReference type="GO" id="GO:0032790">
    <property type="term" value="P:ribosome disassembly"/>
    <property type="evidence" value="ECO:0007669"/>
    <property type="project" value="TreeGrafter"/>
</dbReference>
<dbReference type="GO" id="GO:0006412">
    <property type="term" value="P:translation"/>
    <property type="evidence" value="ECO:0007669"/>
    <property type="project" value="UniProtKB-KW"/>
</dbReference>
<dbReference type="CDD" id="cd03711">
    <property type="entry name" value="Tet_C"/>
    <property type="match status" value="1"/>
</dbReference>
<dbReference type="CDD" id="cd03690">
    <property type="entry name" value="Tet_II"/>
    <property type="match status" value="1"/>
</dbReference>
<dbReference type="CDD" id="cd16258">
    <property type="entry name" value="Tet_III"/>
    <property type="match status" value="1"/>
</dbReference>
<dbReference type="CDD" id="cd01684">
    <property type="entry name" value="Tet_like_IV"/>
    <property type="match status" value="1"/>
</dbReference>
<dbReference type="CDD" id="cd04168">
    <property type="entry name" value="TetM_like"/>
    <property type="match status" value="1"/>
</dbReference>
<dbReference type="Gene3D" id="3.30.230.10">
    <property type="match status" value="1"/>
</dbReference>
<dbReference type="Gene3D" id="3.30.70.240">
    <property type="match status" value="1"/>
</dbReference>
<dbReference type="Gene3D" id="3.30.70.870">
    <property type="entry name" value="Elongation Factor G (Translational Gtpase), domain 3"/>
    <property type="match status" value="1"/>
</dbReference>
<dbReference type="Gene3D" id="3.40.50.300">
    <property type="entry name" value="P-loop containing nucleotide triphosphate hydrolases"/>
    <property type="match status" value="1"/>
</dbReference>
<dbReference type="Gene3D" id="2.40.30.10">
    <property type="entry name" value="Translation factors"/>
    <property type="match status" value="1"/>
</dbReference>
<dbReference type="InterPro" id="IPR053905">
    <property type="entry name" value="EF-G-like_DII"/>
</dbReference>
<dbReference type="InterPro" id="IPR041095">
    <property type="entry name" value="EFG_II"/>
</dbReference>
<dbReference type="InterPro" id="IPR035647">
    <property type="entry name" value="EFG_III/V"/>
</dbReference>
<dbReference type="InterPro" id="IPR000640">
    <property type="entry name" value="EFG_V-like"/>
</dbReference>
<dbReference type="InterPro" id="IPR031157">
    <property type="entry name" value="G_TR_CS"/>
</dbReference>
<dbReference type="InterPro" id="IPR027417">
    <property type="entry name" value="P-loop_NTPase"/>
</dbReference>
<dbReference type="InterPro" id="IPR020568">
    <property type="entry name" value="Ribosomal_Su5_D2-typ_SF"/>
</dbReference>
<dbReference type="InterPro" id="IPR014721">
    <property type="entry name" value="Ribsml_uS5_D2-typ_fold_subgr"/>
</dbReference>
<dbReference type="InterPro" id="IPR005225">
    <property type="entry name" value="Small_GTP-bd"/>
</dbReference>
<dbReference type="InterPro" id="IPR000795">
    <property type="entry name" value="T_Tr_GTP-bd_dom"/>
</dbReference>
<dbReference type="InterPro" id="IPR035650">
    <property type="entry name" value="Tet_C"/>
</dbReference>
<dbReference type="InterPro" id="IPR009000">
    <property type="entry name" value="Transl_B-barrel_sf"/>
</dbReference>
<dbReference type="InterPro" id="IPR005517">
    <property type="entry name" value="Transl_elong_EFG/EF2_IV"/>
</dbReference>
<dbReference type="NCBIfam" id="TIGR00231">
    <property type="entry name" value="small_GTP"/>
    <property type="match status" value="1"/>
</dbReference>
<dbReference type="NCBIfam" id="NF012153">
    <property type="entry name" value="tet_protect"/>
    <property type="match status" value="1"/>
</dbReference>
<dbReference type="NCBIfam" id="NF012155">
    <property type="entry name" value="tet_protect_M"/>
    <property type="match status" value="1"/>
</dbReference>
<dbReference type="NCBIfam" id="NF033148">
    <property type="entry name" value="tet_protect_M_W"/>
    <property type="match status" value="1"/>
</dbReference>
<dbReference type="PANTHER" id="PTHR43261:SF1">
    <property type="entry name" value="RIBOSOME-RELEASING FACTOR 2, MITOCHONDRIAL"/>
    <property type="match status" value="1"/>
</dbReference>
<dbReference type="PANTHER" id="PTHR43261">
    <property type="entry name" value="TRANSLATION ELONGATION FACTOR G-RELATED"/>
    <property type="match status" value="1"/>
</dbReference>
<dbReference type="Pfam" id="PF22042">
    <property type="entry name" value="EF-G_D2"/>
    <property type="match status" value="1"/>
</dbReference>
<dbReference type="Pfam" id="PF00679">
    <property type="entry name" value="EFG_C"/>
    <property type="match status" value="1"/>
</dbReference>
<dbReference type="Pfam" id="PF14492">
    <property type="entry name" value="EFG_III"/>
    <property type="match status" value="1"/>
</dbReference>
<dbReference type="Pfam" id="PF03764">
    <property type="entry name" value="EFG_IV"/>
    <property type="match status" value="1"/>
</dbReference>
<dbReference type="Pfam" id="PF00009">
    <property type="entry name" value="GTP_EFTU"/>
    <property type="match status" value="1"/>
</dbReference>
<dbReference type="PRINTS" id="PR00315">
    <property type="entry name" value="ELONGATNFCT"/>
</dbReference>
<dbReference type="PRINTS" id="PR01037">
    <property type="entry name" value="TCRTETOQM"/>
</dbReference>
<dbReference type="SMART" id="SM00889">
    <property type="entry name" value="EFG_IV"/>
    <property type="match status" value="1"/>
</dbReference>
<dbReference type="SUPFAM" id="SSF54980">
    <property type="entry name" value="EF-G C-terminal domain-like"/>
    <property type="match status" value="2"/>
</dbReference>
<dbReference type="SUPFAM" id="SSF52540">
    <property type="entry name" value="P-loop containing nucleoside triphosphate hydrolases"/>
    <property type="match status" value="1"/>
</dbReference>
<dbReference type="SUPFAM" id="SSF54211">
    <property type="entry name" value="Ribosomal protein S5 domain 2-like"/>
    <property type="match status" value="1"/>
</dbReference>
<dbReference type="SUPFAM" id="SSF50447">
    <property type="entry name" value="Translation proteins"/>
    <property type="match status" value="1"/>
</dbReference>
<dbReference type="PROSITE" id="PS00301">
    <property type="entry name" value="G_TR_1"/>
    <property type="match status" value="1"/>
</dbReference>
<dbReference type="PROSITE" id="PS51722">
    <property type="entry name" value="G_TR_2"/>
    <property type="match status" value="1"/>
</dbReference>
<protein>
    <recommendedName>
        <fullName>Tetracycline resistance protein TetM from transposon Tn1545</fullName>
        <shortName>TetM(1545)</shortName>
    </recommendedName>
</protein>
<feature type="chain" id="PRO_0000091495" description="Tetracycline resistance protein TetM from transposon Tn1545">
    <location>
        <begin position="1"/>
        <end position="639"/>
    </location>
</feature>
<feature type="domain" description="tr-type G" evidence="2">
    <location>
        <begin position="1"/>
        <end position="242"/>
    </location>
</feature>
<feature type="binding site" evidence="1">
    <location>
        <begin position="10"/>
        <end position="17"/>
    </location>
    <ligand>
        <name>GTP</name>
        <dbReference type="ChEBI" id="CHEBI:37565"/>
    </ligand>
</feature>
<feature type="binding site" evidence="1">
    <location>
        <begin position="74"/>
        <end position="78"/>
    </location>
    <ligand>
        <name>GTP</name>
        <dbReference type="ChEBI" id="CHEBI:37565"/>
    </ligand>
</feature>
<feature type="binding site" evidence="1">
    <location>
        <begin position="128"/>
        <end position="131"/>
    </location>
    <ligand>
        <name>GTP</name>
        <dbReference type="ChEBI" id="CHEBI:37565"/>
    </ligand>
</feature>